<protein>
    <recommendedName>
        <fullName>Protein odr-4 homolog</fullName>
    </recommendedName>
</protein>
<sequence length="454" mass="51085">MGRTYIVEETVGQYLSNIGLQGKAFVSGLLIGQCSSQKDYVILATRTPPKEEQSENLKHLKAKLDNLDEEWATEHACQVSRMLPGGLLVLGVFIITTLELANDFQNALRRLMFAVEKSINRKRLWNFTEEEVSERVTLHICASTKKKIFCRTYDIHDPKSSARPADWKYQSGLSSSWLSLECTVHINIHIPLSATSVSYTLEKNTKNGLTRWAKEIENGVYLINGQVKDEDCDLLEGQKKSRGNTQATSHSFDVRVLTQLLLNSDHRSTATVQICSGSVNLKGAVKCRAYIHSSKPKVKDAVQAVKRDILNTVADRCEILFEDLLLNEIPEKKDSEKEFHVLPYRVFVPLPGSTVMLCDYKFDDESAEEIRDHFMEMLDHTIKIEDLEIAEETNTACMSSSMNSQASLDNTDDEQPKQPIKTTMLLKIQQNIGVIAAFTVAVLAAGISFHYFSD</sequence>
<feature type="chain" id="PRO_0000304685" description="Protein odr-4 homolog">
    <location>
        <begin position="1"/>
        <end position="454"/>
    </location>
</feature>
<feature type="transmembrane region" description="Helical" evidence="2">
    <location>
        <begin position="82"/>
        <end position="102"/>
    </location>
</feature>
<feature type="transmembrane region" description="Helical" evidence="2">
    <location>
        <begin position="432"/>
        <end position="452"/>
    </location>
</feature>
<gene>
    <name type="primary">ODR4</name>
</gene>
<organism>
    <name type="scientific">Pongo abelii</name>
    <name type="common">Sumatran orangutan</name>
    <name type="synonym">Pongo pygmaeus abelii</name>
    <dbReference type="NCBI Taxonomy" id="9601"/>
    <lineage>
        <taxon>Eukaryota</taxon>
        <taxon>Metazoa</taxon>
        <taxon>Chordata</taxon>
        <taxon>Craniata</taxon>
        <taxon>Vertebrata</taxon>
        <taxon>Euteleostomi</taxon>
        <taxon>Mammalia</taxon>
        <taxon>Eutheria</taxon>
        <taxon>Euarchontoglires</taxon>
        <taxon>Primates</taxon>
        <taxon>Haplorrhini</taxon>
        <taxon>Catarrhini</taxon>
        <taxon>Hominidae</taxon>
        <taxon>Pongo</taxon>
    </lineage>
</organism>
<comment type="function">
    <text evidence="1">May play a role in the trafficking of a subset of G-protein coupled receptors.</text>
</comment>
<comment type="subcellular location">
    <subcellularLocation>
        <location evidence="2">Membrane</location>
        <topology evidence="2">Multi-pass membrane protein</topology>
    </subcellularLocation>
</comment>
<comment type="similarity">
    <text evidence="3">Belongs to the ODR-4 family.</text>
</comment>
<evidence type="ECO:0000250" key="1">
    <source>
        <dbReference type="UniProtKB" id="Q8I7F8"/>
    </source>
</evidence>
<evidence type="ECO:0000255" key="2"/>
<evidence type="ECO:0000305" key="3"/>
<reference key="1">
    <citation type="submission" date="2004-11" db="EMBL/GenBank/DDBJ databases">
        <authorList>
            <consortium name="The German cDNA consortium"/>
        </authorList>
    </citation>
    <scope>NUCLEOTIDE SEQUENCE [LARGE SCALE MRNA]</scope>
    <source>
        <tissue>Brain cortex</tissue>
    </source>
</reference>
<name>ODR4_PONAB</name>
<proteinExistence type="evidence at transcript level"/>
<dbReference type="EMBL" id="CR860541">
    <property type="protein sequence ID" value="CAH92667.1"/>
    <property type="molecule type" value="mRNA"/>
</dbReference>
<dbReference type="FunCoup" id="Q5R6E9">
    <property type="interactions" value="1736"/>
</dbReference>
<dbReference type="STRING" id="9601.ENSPPYP00000000464"/>
<dbReference type="eggNOG" id="KOG4703">
    <property type="taxonomic scope" value="Eukaryota"/>
</dbReference>
<dbReference type="HOGENOM" id="CLU_043811_0_0_1"/>
<dbReference type="InParanoid" id="Q5R6E9"/>
<dbReference type="Proteomes" id="UP000001595">
    <property type="component" value="Unplaced"/>
</dbReference>
<dbReference type="GO" id="GO:0012505">
    <property type="term" value="C:endomembrane system"/>
    <property type="evidence" value="ECO:0007669"/>
    <property type="project" value="TreeGrafter"/>
</dbReference>
<dbReference type="GO" id="GO:0016020">
    <property type="term" value="C:membrane"/>
    <property type="evidence" value="ECO:0007669"/>
    <property type="project" value="UniProtKB-SubCell"/>
</dbReference>
<dbReference type="GO" id="GO:0008104">
    <property type="term" value="P:protein localization"/>
    <property type="evidence" value="ECO:0007669"/>
    <property type="project" value="TreeGrafter"/>
</dbReference>
<dbReference type="InterPro" id="IPR029454">
    <property type="entry name" value="ODR-4-like"/>
</dbReference>
<dbReference type="PANTHER" id="PTHR33966">
    <property type="entry name" value="PROTEIN ODR-4 HOMOLOG"/>
    <property type="match status" value="1"/>
</dbReference>
<dbReference type="PANTHER" id="PTHR33966:SF1">
    <property type="entry name" value="PROTEIN ODR-4 HOMOLOG"/>
    <property type="match status" value="1"/>
</dbReference>
<dbReference type="Pfam" id="PF14778">
    <property type="entry name" value="ODR4-like"/>
    <property type="match status" value="1"/>
</dbReference>
<accession>Q5R6E9</accession>
<keyword id="KW-0472">Membrane</keyword>
<keyword id="KW-1185">Reference proteome</keyword>
<keyword id="KW-0812">Transmembrane</keyword>
<keyword id="KW-1133">Transmembrane helix</keyword>